<proteinExistence type="inferred from homology"/>
<feature type="chain" id="PRO_0000063422" description="Chaperonin GroEL">
    <location>
        <begin position="1" status="less than"/>
        <end position="151" status="greater than"/>
    </location>
</feature>
<feature type="binding site" evidence="1">
    <location>
        <begin position="41"/>
        <end position="45"/>
    </location>
    <ligand>
        <name>ATP</name>
        <dbReference type="ChEBI" id="CHEBI:30616"/>
    </ligand>
</feature>
<feature type="sequence variant" description="In strain: TMH16.">
    <original>A</original>
    <variation>G</variation>
    <location>
        <position position="50"/>
    </location>
</feature>
<feature type="sequence variant" description="In strain: TMH16.">
    <original>K</original>
    <variation>N</variation>
    <location>
        <position position="121"/>
    </location>
</feature>
<feature type="sequence variant" description="In strain: TMH16.">
    <original>F</original>
    <variation>S</variation>
    <location>
        <position position="136"/>
    </location>
</feature>
<feature type="non-terminal residue">
    <location>
        <position position="1"/>
    </location>
</feature>
<feature type="non-terminal residue">
    <location>
        <position position="151"/>
    </location>
</feature>
<name>CH60_MYCAV</name>
<dbReference type="EC" id="5.6.1.7" evidence="1"/>
<dbReference type="EMBL" id="U55826">
    <property type="protein sequence ID" value="AAC44449.1"/>
    <property type="molecule type" value="Genomic_DNA"/>
</dbReference>
<dbReference type="EMBL" id="U55827">
    <property type="protein sequence ID" value="AAC44450.1"/>
    <property type="molecule type" value="Genomic_DNA"/>
</dbReference>
<dbReference type="EMBL" id="U17922">
    <property type="protein sequence ID" value="AAB39042.1"/>
    <property type="molecule type" value="Genomic_DNA"/>
</dbReference>
<dbReference type="EMBL" id="U17923">
    <property type="protein sequence ID" value="AAB39043.1"/>
    <property type="molecule type" value="Genomic_DNA"/>
</dbReference>
<dbReference type="EMBL" id="U17924">
    <property type="protein sequence ID" value="AAB39896.1"/>
    <property type="molecule type" value="Genomic_DNA"/>
</dbReference>
<dbReference type="EMBL" id="S76642">
    <property type="protein sequence ID" value="AAP31977.1"/>
    <property type="molecule type" value="Genomic_DNA"/>
</dbReference>
<dbReference type="PIR" id="S05294">
    <property type="entry name" value="S05294"/>
</dbReference>
<dbReference type="SMR" id="Q48900"/>
<dbReference type="GO" id="GO:0005737">
    <property type="term" value="C:cytoplasm"/>
    <property type="evidence" value="ECO:0007669"/>
    <property type="project" value="UniProtKB-SubCell"/>
</dbReference>
<dbReference type="GO" id="GO:0005524">
    <property type="term" value="F:ATP binding"/>
    <property type="evidence" value="ECO:0007669"/>
    <property type="project" value="UniProtKB-KW"/>
</dbReference>
<dbReference type="GO" id="GO:0140662">
    <property type="term" value="F:ATP-dependent protein folding chaperone"/>
    <property type="evidence" value="ECO:0007669"/>
    <property type="project" value="InterPro"/>
</dbReference>
<dbReference type="GO" id="GO:0016853">
    <property type="term" value="F:isomerase activity"/>
    <property type="evidence" value="ECO:0007669"/>
    <property type="project" value="UniProtKB-KW"/>
</dbReference>
<dbReference type="GO" id="GO:0042026">
    <property type="term" value="P:protein refolding"/>
    <property type="evidence" value="ECO:0007669"/>
    <property type="project" value="InterPro"/>
</dbReference>
<dbReference type="Gene3D" id="1.10.560.10">
    <property type="entry name" value="GroEL-like equatorial domain"/>
    <property type="match status" value="1"/>
</dbReference>
<dbReference type="Gene3D" id="3.30.260.10">
    <property type="entry name" value="TCP-1-like chaperonin intermediate domain"/>
    <property type="match status" value="1"/>
</dbReference>
<dbReference type="InterPro" id="IPR017998">
    <property type="entry name" value="Chaperone_TCP-1"/>
</dbReference>
<dbReference type="InterPro" id="IPR001844">
    <property type="entry name" value="Cpn60/GroEL"/>
</dbReference>
<dbReference type="InterPro" id="IPR002423">
    <property type="entry name" value="Cpn60/GroEL/TCP-1"/>
</dbReference>
<dbReference type="InterPro" id="IPR027413">
    <property type="entry name" value="GROEL-like_equatorial_sf"/>
</dbReference>
<dbReference type="InterPro" id="IPR027410">
    <property type="entry name" value="TCP-1-like_intermed_sf"/>
</dbReference>
<dbReference type="PANTHER" id="PTHR45633">
    <property type="entry name" value="60 KDA HEAT SHOCK PROTEIN, MITOCHONDRIAL"/>
    <property type="match status" value="1"/>
</dbReference>
<dbReference type="Pfam" id="PF00118">
    <property type="entry name" value="Cpn60_TCP1"/>
    <property type="match status" value="1"/>
</dbReference>
<dbReference type="PRINTS" id="PR00304">
    <property type="entry name" value="TCOMPLEXTCP1"/>
</dbReference>
<dbReference type="SUPFAM" id="SSF48592">
    <property type="entry name" value="GroEL equatorial domain-like"/>
    <property type="match status" value="1"/>
</dbReference>
<sequence length="151" mass="15827">PTITNDGVSIAKEIELEDPYEKIGAELVKEVAKKTDDVAGDGTTTATVLAQALVREGLRNVAAGANPLGLKRGIEKAVEKVTETLLKSAKEVETKDQIAATAAISAGDQSIGDLIAEAMDKVGNEGVITVEESNTFGLQLELTEGMRFDKG</sequence>
<reference key="1">
    <citation type="submission" date="1996-05" db="EMBL/GenBank/DDBJ databases">
        <authorList>
            <person name="Ros C."/>
            <person name="Belak K."/>
        </authorList>
    </citation>
    <scope>NUCLEOTIDE SEQUENCE [GENOMIC DNA]</scope>
    <source>
        <strain>234</strain>
        <strain>368</strain>
    </source>
</reference>
<reference key="2">
    <citation type="journal article" date="1995" name="Arch. Pathol. Lab. Med.">
        <title>Rapid Mycobacterium species assignment and unambiguous identification of mutations associated with antimicrobial resistance in Mycobacterium tuberculosis by automated DNA sequencing.</title>
        <authorList>
            <person name="Kapur V."/>
            <person name="Li L.L."/>
            <person name="Hamrick M.R."/>
            <person name="Plikaytis B.B."/>
            <person name="Shinnick T.M."/>
            <person name="Telenti A."/>
            <person name="Jacobs W.R. Jr."/>
            <person name="Banerjee A."/>
            <person name="Cole S."/>
            <person name="Yuen K.Y."/>
            <person name="Clarridge J.E."/>
            <person name="Kreiswirth B.N."/>
            <person name="Musser J.M."/>
        </authorList>
    </citation>
    <scope>NUCLEOTIDE SEQUENCE [GENOMIC DNA] OF 19-138</scope>
    <source>
        <strain>88-1107</strain>
        <strain>89-1177</strain>
        <strain>89-615</strain>
        <strain>TMH16</strain>
    </source>
</reference>
<reference key="3">
    <citation type="journal article" date="1995" name="Rinsho Byori">
        <title>Detection and identification of mycobacteria by PCR-RFLP method.</title>
        <authorList>
            <person name="Hidaka E."/>
            <person name="Ueno I."/>
            <person name="Kawakami Y."/>
            <person name="Furuwatari C."/>
            <person name="Furihata K."/>
            <person name="Katsuyama T."/>
        </authorList>
    </citation>
    <scope>NUCLEOTIDE SEQUENCE [GENOMIC DNA] OF 20-133</scope>
</reference>
<protein>
    <recommendedName>
        <fullName evidence="1">Chaperonin GroEL</fullName>
        <ecNumber evidence="1">5.6.1.7</ecNumber>
    </recommendedName>
    <alternativeName>
        <fullName evidence="1">60 kDa chaperonin</fullName>
    </alternativeName>
    <alternativeName>
        <fullName>65 kDa heat shock protein</fullName>
    </alternativeName>
    <alternativeName>
        <fullName evidence="1">Chaperonin-60</fullName>
        <shortName evidence="1">Cpn60</shortName>
    </alternativeName>
</protein>
<comment type="function">
    <text evidence="1">Together with its co-chaperonin GroES, plays an essential role in assisting protein folding. The GroEL-GroES system forms a nano-cage that allows encapsulation of the non-native substrate proteins and provides a physical environment optimized to promote and accelerate protein folding.</text>
</comment>
<comment type="catalytic activity">
    <reaction evidence="1">
        <text>ATP + H2O + a folded polypeptide = ADP + phosphate + an unfolded polypeptide.</text>
        <dbReference type="EC" id="5.6.1.7"/>
    </reaction>
</comment>
<comment type="subunit">
    <text evidence="1">Forms a cylinder of 14 subunits composed of two heptameric rings stacked back-to-back. Interacts with the co-chaperonin GroES.</text>
</comment>
<comment type="subcellular location">
    <subcellularLocation>
        <location evidence="1">Cytoplasm</location>
    </subcellularLocation>
</comment>
<comment type="similarity">
    <text evidence="1 2">Belongs to the chaperonin (HSP60) family.</text>
</comment>
<organism>
    <name type="scientific">Mycobacterium avium</name>
    <dbReference type="NCBI Taxonomy" id="1764"/>
    <lineage>
        <taxon>Bacteria</taxon>
        <taxon>Bacillati</taxon>
        <taxon>Actinomycetota</taxon>
        <taxon>Actinomycetes</taxon>
        <taxon>Mycobacteriales</taxon>
        <taxon>Mycobacteriaceae</taxon>
        <taxon>Mycobacterium</taxon>
        <taxon>Mycobacterium avium complex (MAC)</taxon>
    </lineage>
</organism>
<evidence type="ECO:0000255" key="1">
    <source>
        <dbReference type="HAMAP-Rule" id="MF_00600"/>
    </source>
</evidence>
<evidence type="ECO:0000305" key="2"/>
<gene>
    <name evidence="1" type="primary">groEL</name>
    <name evidence="1" type="synonym">groL</name>
    <name type="synonym">mopA</name>
</gene>
<accession>Q48900</accession>
<accession>Q48885</accession>
<accession>Q48886</accession>
<accession>Q48887</accession>
<accession>Q48901</accession>
<accession>Q53491</accession>
<keyword id="KW-0067">ATP-binding</keyword>
<keyword id="KW-0143">Chaperone</keyword>
<keyword id="KW-0963">Cytoplasm</keyword>
<keyword id="KW-0413">Isomerase</keyword>
<keyword id="KW-0547">Nucleotide-binding</keyword>
<keyword id="KW-0346">Stress response</keyword>